<protein>
    <recommendedName>
        <fullName evidence="1">ATP-dependent Clp protease proteolytic subunit</fullName>
        <ecNumber evidence="1">3.4.21.92</ecNumber>
    </recommendedName>
    <alternativeName>
        <fullName evidence="1">Endopeptidase Clp</fullName>
    </alternativeName>
</protein>
<evidence type="ECO:0000255" key="1">
    <source>
        <dbReference type="HAMAP-Rule" id="MF_00444"/>
    </source>
</evidence>
<name>CLPP_FRATM</name>
<organism>
    <name type="scientific">Francisella tularensis subsp. mediasiatica (strain FSC147)</name>
    <dbReference type="NCBI Taxonomy" id="441952"/>
    <lineage>
        <taxon>Bacteria</taxon>
        <taxon>Pseudomonadati</taxon>
        <taxon>Pseudomonadota</taxon>
        <taxon>Gammaproteobacteria</taxon>
        <taxon>Thiotrichales</taxon>
        <taxon>Francisellaceae</taxon>
        <taxon>Francisella</taxon>
    </lineage>
</organism>
<feature type="chain" id="PRO_1000189643" description="ATP-dependent Clp protease proteolytic subunit">
    <location>
        <begin position="1"/>
        <end position="201"/>
    </location>
</feature>
<feature type="active site" description="Nucleophile" evidence="1">
    <location>
        <position position="101"/>
    </location>
</feature>
<feature type="active site" evidence="1">
    <location>
        <position position="126"/>
    </location>
</feature>
<dbReference type="EC" id="3.4.21.92" evidence="1"/>
<dbReference type="EMBL" id="CP000915">
    <property type="protein sequence ID" value="ACD30677.1"/>
    <property type="molecule type" value="Genomic_DNA"/>
</dbReference>
<dbReference type="SMR" id="B2SG18"/>
<dbReference type="MEROPS" id="S14.001"/>
<dbReference type="KEGG" id="ftm:FTM_0699"/>
<dbReference type="HOGENOM" id="CLU_058707_3_2_6"/>
<dbReference type="GO" id="GO:0005737">
    <property type="term" value="C:cytoplasm"/>
    <property type="evidence" value="ECO:0007669"/>
    <property type="project" value="UniProtKB-SubCell"/>
</dbReference>
<dbReference type="GO" id="GO:0009368">
    <property type="term" value="C:endopeptidase Clp complex"/>
    <property type="evidence" value="ECO:0007669"/>
    <property type="project" value="TreeGrafter"/>
</dbReference>
<dbReference type="GO" id="GO:0004176">
    <property type="term" value="F:ATP-dependent peptidase activity"/>
    <property type="evidence" value="ECO:0007669"/>
    <property type="project" value="InterPro"/>
</dbReference>
<dbReference type="GO" id="GO:0051117">
    <property type="term" value="F:ATPase binding"/>
    <property type="evidence" value="ECO:0007669"/>
    <property type="project" value="TreeGrafter"/>
</dbReference>
<dbReference type="GO" id="GO:0004252">
    <property type="term" value="F:serine-type endopeptidase activity"/>
    <property type="evidence" value="ECO:0007669"/>
    <property type="project" value="UniProtKB-UniRule"/>
</dbReference>
<dbReference type="GO" id="GO:0006515">
    <property type="term" value="P:protein quality control for misfolded or incompletely synthesized proteins"/>
    <property type="evidence" value="ECO:0007669"/>
    <property type="project" value="TreeGrafter"/>
</dbReference>
<dbReference type="CDD" id="cd07017">
    <property type="entry name" value="S14_ClpP_2"/>
    <property type="match status" value="1"/>
</dbReference>
<dbReference type="FunFam" id="3.90.226.10:FF:000001">
    <property type="entry name" value="ATP-dependent Clp protease proteolytic subunit"/>
    <property type="match status" value="1"/>
</dbReference>
<dbReference type="Gene3D" id="3.90.226.10">
    <property type="entry name" value="2-enoyl-CoA Hydratase, Chain A, domain 1"/>
    <property type="match status" value="1"/>
</dbReference>
<dbReference type="HAMAP" id="MF_00444">
    <property type="entry name" value="ClpP"/>
    <property type="match status" value="1"/>
</dbReference>
<dbReference type="InterPro" id="IPR001907">
    <property type="entry name" value="ClpP"/>
</dbReference>
<dbReference type="InterPro" id="IPR029045">
    <property type="entry name" value="ClpP/crotonase-like_dom_sf"/>
</dbReference>
<dbReference type="InterPro" id="IPR023562">
    <property type="entry name" value="ClpP/TepA"/>
</dbReference>
<dbReference type="InterPro" id="IPR033135">
    <property type="entry name" value="ClpP_His_AS"/>
</dbReference>
<dbReference type="InterPro" id="IPR018215">
    <property type="entry name" value="ClpP_Ser_AS"/>
</dbReference>
<dbReference type="NCBIfam" id="TIGR00493">
    <property type="entry name" value="clpP"/>
    <property type="match status" value="1"/>
</dbReference>
<dbReference type="NCBIfam" id="NF001368">
    <property type="entry name" value="PRK00277.1"/>
    <property type="match status" value="1"/>
</dbReference>
<dbReference type="NCBIfam" id="NF009205">
    <property type="entry name" value="PRK12553.1"/>
    <property type="match status" value="1"/>
</dbReference>
<dbReference type="PANTHER" id="PTHR10381">
    <property type="entry name" value="ATP-DEPENDENT CLP PROTEASE PROTEOLYTIC SUBUNIT"/>
    <property type="match status" value="1"/>
</dbReference>
<dbReference type="PANTHER" id="PTHR10381:SF70">
    <property type="entry name" value="ATP-DEPENDENT CLP PROTEASE PROTEOLYTIC SUBUNIT"/>
    <property type="match status" value="1"/>
</dbReference>
<dbReference type="Pfam" id="PF00574">
    <property type="entry name" value="CLP_protease"/>
    <property type="match status" value="1"/>
</dbReference>
<dbReference type="PRINTS" id="PR00127">
    <property type="entry name" value="CLPPROTEASEP"/>
</dbReference>
<dbReference type="SUPFAM" id="SSF52096">
    <property type="entry name" value="ClpP/crotonase"/>
    <property type="match status" value="1"/>
</dbReference>
<dbReference type="PROSITE" id="PS00382">
    <property type="entry name" value="CLP_PROTEASE_HIS"/>
    <property type="match status" value="1"/>
</dbReference>
<dbReference type="PROSITE" id="PS00381">
    <property type="entry name" value="CLP_PROTEASE_SER"/>
    <property type="match status" value="1"/>
</dbReference>
<reference key="1">
    <citation type="journal article" date="2009" name="PLoS Pathog.">
        <title>Molecular evolutionary consequences of niche restriction in Francisella tularensis, a facultative intracellular pathogen.</title>
        <authorList>
            <person name="Larsson P."/>
            <person name="Elfsmark D."/>
            <person name="Svensson K."/>
            <person name="Wikstroem P."/>
            <person name="Forsman M."/>
            <person name="Brettin T."/>
            <person name="Keim P."/>
            <person name="Johansson A."/>
        </authorList>
    </citation>
    <scope>NUCLEOTIDE SEQUENCE [LARGE SCALE GENOMIC DNA]</scope>
    <source>
        <strain>FSC147</strain>
    </source>
</reference>
<sequence length="201" mass="22150">MITNNLVPTVIEKTAGGERAFDIYSRLLKERIVFLNGEVNDHSANLVIAQLLFLESEDPDKDIYFYINSPGGMVTAGMGVYDTMQFIKPDVSTICIGLAASMGSLLLAGGAKGKRYSLPSSQIMIHQPLGGFRGQASDIEIHAKNILRIKDRLNKVLAHHTGQDLETIVKDTDRDNFMMADEAKAYGLIDHVIESREAIIK</sequence>
<keyword id="KW-0963">Cytoplasm</keyword>
<keyword id="KW-0378">Hydrolase</keyword>
<keyword id="KW-0645">Protease</keyword>
<keyword id="KW-0720">Serine protease</keyword>
<accession>B2SG18</accession>
<gene>
    <name evidence="1" type="primary">clpP</name>
    <name type="ordered locus">FTM_0699</name>
</gene>
<comment type="function">
    <text evidence="1">Cleaves peptides in various proteins in a process that requires ATP hydrolysis. Has a chymotrypsin-like activity. Plays a major role in the degradation of misfolded proteins.</text>
</comment>
<comment type="catalytic activity">
    <reaction evidence="1">
        <text>Hydrolysis of proteins to small peptides in the presence of ATP and magnesium. alpha-casein is the usual test substrate. In the absence of ATP, only oligopeptides shorter than five residues are hydrolyzed (such as succinyl-Leu-Tyr-|-NHMec, and Leu-Tyr-Leu-|-Tyr-Trp, in which cleavage of the -Tyr-|-Leu- and -Tyr-|-Trp bonds also occurs).</text>
        <dbReference type="EC" id="3.4.21.92"/>
    </reaction>
</comment>
<comment type="subunit">
    <text evidence="1">Fourteen ClpP subunits assemble into 2 heptameric rings which stack back to back to give a disk-like structure with a central cavity, resembling the structure of eukaryotic proteasomes.</text>
</comment>
<comment type="subcellular location">
    <subcellularLocation>
        <location evidence="1">Cytoplasm</location>
    </subcellularLocation>
</comment>
<comment type="similarity">
    <text evidence="1">Belongs to the peptidase S14 family.</text>
</comment>
<proteinExistence type="inferred from homology"/>